<gene>
    <name type="primary">MT-CYB</name>
    <name type="synonym">COB</name>
    <name type="synonym">CYTB</name>
    <name type="synonym">MTCYB</name>
</gene>
<evidence type="ECO:0000250" key="1"/>
<evidence type="ECO:0000250" key="2">
    <source>
        <dbReference type="UniProtKB" id="P00157"/>
    </source>
</evidence>
<evidence type="ECO:0000255" key="3">
    <source>
        <dbReference type="PROSITE-ProRule" id="PRU00967"/>
    </source>
</evidence>
<evidence type="ECO:0000255" key="4">
    <source>
        <dbReference type="PROSITE-ProRule" id="PRU00968"/>
    </source>
</evidence>
<geneLocation type="mitochondrion"/>
<sequence>MTNIRKTHPLTKILNNTFIDLPTPSNISSWWNFGSLLGLCLIMQILTGLFLAMHYTPDTSTAFSSVAHICRDVNYGWFIRYLHANGASMFFICLYAHIGRGLYYGSYMFQETWNIGVLLLLTVMATAFVGYVLPWGQMSFWGATVITNLLSAIPYIGTTLVEWIWGGFSVDKATLTRFFAFHFILPFIITALAAVHLLFLHETGSNNPTGIPSNMDMIPFHPYYTIKDILGALFLILTLLALTLFAPDLLGDPDNYTPANPLSTPAHIKPEWYFLFAYAILRSIPNKLGGVLALLLSILILIFIPMLQTSKQRSMMFRPFSQLLFWTLIADLLTLTWIGGQPVEHPYIIVGQLASILYFFLILVLMPTVSLIENKLLKW</sequence>
<organism>
    <name type="scientific">Cephalorhynchus eutropia</name>
    <name type="common">Chilean dolphin</name>
    <name type="synonym">Delphinus eutropia</name>
    <dbReference type="NCBI Taxonomy" id="27608"/>
    <lineage>
        <taxon>Eukaryota</taxon>
        <taxon>Metazoa</taxon>
        <taxon>Chordata</taxon>
        <taxon>Craniata</taxon>
        <taxon>Vertebrata</taxon>
        <taxon>Euteleostomi</taxon>
        <taxon>Mammalia</taxon>
        <taxon>Eutheria</taxon>
        <taxon>Laurasiatheria</taxon>
        <taxon>Artiodactyla</taxon>
        <taxon>Whippomorpha</taxon>
        <taxon>Cetacea</taxon>
        <taxon>Odontoceti</taxon>
        <taxon>Delphinidae</taxon>
        <taxon>Cephalorhynchus</taxon>
    </lineage>
</organism>
<accession>Q9TDL3</accession>
<comment type="function">
    <text evidence="2">Component of the ubiquinol-cytochrome c reductase complex (complex III or cytochrome b-c1 complex) that is part of the mitochondrial respiratory chain. The b-c1 complex mediates electron transfer from ubiquinol to cytochrome c. Contributes to the generation of a proton gradient across the mitochondrial membrane that is then used for ATP synthesis.</text>
</comment>
<comment type="cofactor">
    <cofactor evidence="2">
        <name>heme b</name>
        <dbReference type="ChEBI" id="CHEBI:60344"/>
    </cofactor>
    <text evidence="2">Binds 2 heme b groups non-covalently.</text>
</comment>
<comment type="subunit">
    <text evidence="2">The cytochrome bc1 complex contains 11 subunits: 3 respiratory subunits (MT-CYB, CYC1 and UQCRFS1), 2 core proteins (UQCRC1 and UQCRC2) and 6 low-molecular weight proteins (UQCRH/QCR6, UQCRB/QCR7, UQCRQ/QCR8, UQCR10/QCR9, UQCR11/QCR10 and a cleavage product of UQCRFS1). This cytochrome bc1 complex then forms a dimer.</text>
</comment>
<comment type="subcellular location">
    <subcellularLocation>
        <location evidence="2">Mitochondrion inner membrane</location>
        <topology evidence="2">Multi-pass membrane protein</topology>
    </subcellularLocation>
</comment>
<comment type="miscellaneous">
    <text evidence="1">Heme 1 (or BL or b562) is low-potential and absorbs at about 562 nm, and heme 2 (or BH or b566) is high-potential and absorbs at about 566 nm.</text>
</comment>
<comment type="similarity">
    <text evidence="3 4">Belongs to the cytochrome b family.</text>
</comment>
<comment type="caution">
    <text evidence="2">The full-length protein contains only eight transmembrane helices, not nine as predicted by bioinformatics tools.</text>
</comment>
<protein>
    <recommendedName>
        <fullName>Cytochrome b</fullName>
    </recommendedName>
    <alternativeName>
        <fullName>Complex III subunit 3</fullName>
    </alternativeName>
    <alternativeName>
        <fullName>Complex III subunit III</fullName>
    </alternativeName>
    <alternativeName>
        <fullName>Cytochrome b-c1 complex subunit 3</fullName>
    </alternativeName>
    <alternativeName>
        <fullName>Ubiquinol-cytochrome-c reductase complex cytochrome b subunit</fullName>
    </alternativeName>
</protein>
<dbReference type="EMBL" id="AF084072">
    <property type="protein sequence ID" value="AAD54449.1"/>
    <property type="molecule type" value="Genomic_DNA"/>
</dbReference>
<dbReference type="SMR" id="Q9TDL3"/>
<dbReference type="GO" id="GO:0005743">
    <property type="term" value="C:mitochondrial inner membrane"/>
    <property type="evidence" value="ECO:0007669"/>
    <property type="project" value="UniProtKB-SubCell"/>
</dbReference>
<dbReference type="GO" id="GO:0045275">
    <property type="term" value="C:respiratory chain complex III"/>
    <property type="evidence" value="ECO:0007669"/>
    <property type="project" value="InterPro"/>
</dbReference>
<dbReference type="GO" id="GO:0046872">
    <property type="term" value="F:metal ion binding"/>
    <property type="evidence" value="ECO:0007669"/>
    <property type="project" value="UniProtKB-KW"/>
</dbReference>
<dbReference type="GO" id="GO:0008121">
    <property type="term" value="F:ubiquinol-cytochrome-c reductase activity"/>
    <property type="evidence" value="ECO:0007669"/>
    <property type="project" value="InterPro"/>
</dbReference>
<dbReference type="GO" id="GO:0006122">
    <property type="term" value="P:mitochondrial electron transport, ubiquinol to cytochrome c"/>
    <property type="evidence" value="ECO:0007669"/>
    <property type="project" value="TreeGrafter"/>
</dbReference>
<dbReference type="CDD" id="cd00290">
    <property type="entry name" value="cytochrome_b_C"/>
    <property type="match status" value="1"/>
</dbReference>
<dbReference type="CDD" id="cd00284">
    <property type="entry name" value="Cytochrome_b_N"/>
    <property type="match status" value="1"/>
</dbReference>
<dbReference type="FunFam" id="1.20.810.10:FF:000002">
    <property type="entry name" value="Cytochrome b"/>
    <property type="match status" value="1"/>
</dbReference>
<dbReference type="Gene3D" id="1.20.810.10">
    <property type="entry name" value="Cytochrome Bc1 Complex, Chain C"/>
    <property type="match status" value="1"/>
</dbReference>
<dbReference type="InterPro" id="IPR005798">
    <property type="entry name" value="Cyt_b/b6_C"/>
</dbReference>
<dbReference type="InterPro" id="IPR036150">
    <property type="entry name" value="Cyt_b/b6_C_sf"/>
</dbReference>
<dbReference type="InterPro" id="IPR005797">
    <property type="entry name" value="Cyt_b/b6_N"/>
</dbReference>
<dbReference type="InterPro" id="IPR027387">
    <property type="entry name" value="Cytb/b6-like_sf"/>
</dbReference>
<dbReference type="InterPro" id="IPR030689">
    <property type="entry name" value="Cytochrome_b"/>
</dbReference>
<dbReference type="InterPro" id="IPR048260">
    <property type="entry name" value="Cytochrome_b_C_euk/bac"/>
</dbReference>
<dbReference type="InterPro" id="IPR048259">
    <property type="entry name" value="Cytochrome_b_N_euk/bac"/>
</dbReference>
<dbReference type="InterPro" id="IPR016174">
    <property type="entry name" value="Di-haem_cyt_TM"/>
</dbReference>
<dbReference type="PANTHER" id="PTHR19271">
    <property type="entry name" value="CYTOCHROME B"/>
    <property type="match status" value="1"/>
</dbReference>
<dbReference type="PANTHER" id="PTHR19271:SF16">
    <property type="entry name" value="CYTOCHROME B"/>
    <property type="match status" value="1"/>
</dbReference>
<dbReference type="Pfam" id="PF00032">
    <property type="entry name" value="Cytochrom_B_C"/>
    <property type="match status" value="1"/>
</dbReference>
<dbReference type="Pfam" id="PF00033">
    <property type="entry name" value="Cytochrome_B"/>
    <property type="match status" value="1"/>
</dbReference>
<dbReference type="PIRSF" id="PIRSF038885">
    <property type="entry name" value="COB"/>
    <property type="match status" value="1"/>
</dbReference>
<dbReference type="SUPFAM" id="SSF81648">
    <property type="entry name" value="a domain/subunit of cytochrome bc1 complex (Ubiquinol-cytochrome c reductase)"/>
    <property type="match status" value="1"/>
</dbReference>
<dbReference type="SUPFAM" id="SSF81342">
    <property type="entry name" value="Transmembrane di-heme cytochromes"/>
    <property type="match status" value="1"/>
</dbReference>
<dbReference type="PROSITE" id="PS51003">
    <property type="entry name" value="CYTB_CTER"/>
    <property type="match status" value="1"/>
</dbReference>
<dbReference type="PROSITE" id="PS51002">
    <property type="entry name" value="CYTB_NTER"/>
    <property type="match status" value="1"/>
</dbReference>
<feature type="chain" id="PRO_0000060746" description="Cytochrome b">
    <location>
        <begin position="1"/>
        <end position="379"/>
    </location>
</feature>
<feature type="transmembrane region" description="Helical" evidence="2">
    <location>
        <begin position="33"/>
        <end position="53"/>
    </location>
</feature>
<feature type="transmembrane region" description="Helical" evidence="2">
    <location>
        <begin position="77"/>
        <end position="98"/>
    </location>
</feature>
<feature type="transmembrane region" description="Helical" evidence="2">
    <location>
        <begin position="113"/>
        <end position="133"/>
    </location>
</feature>
<feature type="transmembrane region" description="Helical" evidence="2">
    <location>
        <begin position="178"/>
        <end position="198"/>
    </location>
</feature>
<feature type="transmembrane region" description="Helical" evidence="2">
    <location>
        <begin position="226"/>
        <end position="246"/>
    </location>
</feature>
<feature type="transmembrane region" description="Helical" evidence="2">
    <location>
        <begin position="288"/>
        <end position="308"/>
    </location>
</feature>
<feature type="transmembrane region" description="Helical" evidence="2">
    <location>
        <begin position="320"/>
        <end position="340"/>
    </location>
</feature>
<feature type="transmembrane region" description="Helical" evidence="2">
    <location>
        <begin position="347"/>
        <end position="367"/>
    </location>
</feature>
<feature type="binding site" description="axial binding residue" evidence="2">
    <location>
        <position position="83"/>
    </location>
    <ligand>
        <name>heme b</name>
        <dbReference type="ChEBI" id="CHEBI:60344"/>
        <label>b562</label>
    </ligand>
    <ligandPart>
        <name>Fe</name>
        <dbReference type="ChEBI" id="CHEBI:18248"/>
    </ligandPart>
</feature>
<feature type="binding site" description="axial binding residue" evidence="2">
    <location>
        <position position="97"/>
    </location>
    <ligand>
        <name>heme b</name>
        <dbReference type="ChEBI" id="CHEBI:60344"/>
        <label>b566</label>
    </ligand>
    <ligandPart>
        <name>Fe</name>
        <dbReference type="ChEBI" id="CHEBI:18248"/>
    </ligandPart>
</feature>
<feature type="binding site" description="axial binding residue" evidence="2">
    <location>
        <position position="182"/>
    </location>
    <ligand>
        <name>heme b</name>
        <dbReference type="ChEBI" id="CHEBI:60344"/>
        <label>b562</label>
    </ligand>
    <ligandPart>
        <name>Fe</name>
        <dbReference type="ChEBI" id="CHEBI:18248"/>
    </ligandPart>
</feature>
<feature type="binding site" description="axial binding residue" evidence="2">
    <location>
        <position position="196"/>
    </location>
    <ligand>
        <name>heme b</name>
        <dbReference type="ChEBI" id="CHEBI:60344"/>
        <label>b566</label>
    </ligand>
    <ligandPart>
        <name>Fe</name>
        <dbReference type="ChEBI" id="CHEBI:18248"/>
    </ligandPart>
</feature>
<feature type="binding site" evidence="2">
    <location>
        <position position="201"/>
    </location>
    <ligand>
        <name>a ubiquinone</name>
        <dbReference type="ChEBI" id="CHEBI:16389"/>
    </ligand>
</feature>
<name>CYB_CEPEU</name>
<proteinExistence type="inferred from homology"/>
<reference key="1">
    <citation type="journal article" date="1999" name="Mar. Mamm. Sci.">
        <title>Phylogenetic relationships among the delphinid cetaceans based on full cytochrome b sequences.</title>
        <authorList>
            <person name="LeDuc R.G."/>
            <person name="Perrin W.F."/>
            <person name="Dizon A.E."/>
        </authorList>
    </citation>
    <scope>NUCLEOTIDE SEQUENCE [GENOMIC DNA]</scope>
</reference>
<keyword id="KW-0249">Electron transport</keyword>
<keyword id="KW-0349">Heme</keyword>
<keyword id="KW-0408">Iron</keyword>
<keyword id="KW-0472">Membrane</keyword>
<keyword id="KW-0479">Metal-binding</keyword>
<keyword id="KW-0496">Mitochondrion</keyword>
<keyword id="KW-0999">Mitochondrion inner membrane</keyword>
<keyword id="KW-0679">Respiratory chain</keyword>
<keyword id="KW-0812">Transmembrane</keyword>
<keyword id="KW-1133">Transmembrane helix</keyword>
<keyword id="KW-0813">Transport</keyword>
<keyword id="KW-0830">Ubiquinone</keyword>